<feature type="chain" id="PRO_0000117131" description="tRNA uridine 5-carboxymethylaminomethyl modification enzyme MnmG">
    <location>
        <begin position="1"/>
        <end position="611"/>
    </location>
</feature>
<feature type="binding site" evidence="1">
    <location>
        <begin position="8"/>
        <end position="13"/>
    </location>
    <ligand>
        <name>FAD</name>
        <dbReference type="ChEBI" id="CHEBI:57692"/>
    </ligand>
</feature>
<feature type="binding site" evidence="1">
    <location>
        <position position="120"/>
    </location>
    <ligand>
        <name>FAD</name>
        <dbReference type="ChEBI" id="CHEBI:57692"/>
    </ligand>
</feature>
<feature type="binding site" evidence="1">
    <location>
        <position position="175"/>
    </location>
    <ligand>
        <name>FAD</name>
        <dbReference type="ChEBI" id="CHEBI:57692"/>
    </ligand>
</feature>
<feature type="binding site" evidence="1">
    <location>
        <begin position="268"/>
        <end position="282"/>
    </location>
    <ligand>
        <name>NAD(+)</name>
        <dbReference type="ChEBI" id="CHEBI:57540"/>
    </ligand>
</feature>
<feature type="binding site" evidence="1">
    <location>
        <position position="365"/>
    </location>
    <ligand>
        <name>FAD</name>
        <dbReference type="ChEBI" id="CHEBI:57692"/>
    </ligand>
</feature>
<proteinExistence type="inferred from homology"/>
<organism>
    <name type="scientific">Mycoplasmoides gallisepticum (strain R(low / passage 15 / clone 2))</name>
    <name type="common">Mycoplasma gallisepticum</name>
    <dbReference type="NCBI Taxonomy" id="710127"/>
    <lineage>
        <taxon>Bacteria</taxon>
        <taxon>Bacillati</taxon>
        <taxon>Mycoplasmatota</taxon>
        <taxon>Mycoplasmoidales</taxon>
        <taxon>Mycoplasmoidaceae</taxon>
        <taxon>Mycoplasmoides</taxon>
    </lineage>
</organism>
<reference key="1">
    <citation type="journal article" date="2003" name="Microbiology">
        <title>The complete genome sequence of the avian pathogen Mycoplasma gallisepticum strain R(low).</title>
        <authorList>
            <person name="Papazisi L."/>
            <person name="Gorton T.S."/>
            <person name="Kutish G."/>
            <person name="Markham P.F."/>
            <person name="Browning G.F."/>
            <person name="Nguyen D.K."/>
            <person name="Swartzell S."/>
            <person name="Madan A."/>
            <person name="Mahairas G."/>
            <person name="Geary S.J."/>
        </authorList>
    </citation>
    <scope>NUCLEOTIDE SEQUENCE [LARGE SCALE GENOMIC DNA]</scope>
    <source>
        <strain>R(low / passage 15 / clone 2)</strain>
    </source>
</reference>
<name>MNMG_MYCGA</name>
<evidence type="ECO:0000255" key="1">
    <source>
        <dbReference type="HAMAP-Rule" id="MF_00129"/>
    </source>
</evidence>
<protein>
    <recommendedName>
        <fullName evidence="1">tRNA uridine 5-carboxymethylaminomethyl modification enzyme MnmG</fullName>
    </recommendedName>
    <alternativeName>
        <fullName evidence="1">Glucose-inhibited division protein A</fullName>
    </alternativeName>
</protein>
<dbReference type="EMBL" id="AE015450">
    <property type="protein sequence ID" value="AAP56993.2"/>
    <property type="molecule type" value="Genomic_DNA"/>
</dbReference>
<dbReference type="RefSeq" id="WP_011113903.1">
    <property type="nucleotide sequence ID" value="NC_004829.2"/>
</dbReference>
<dbReference type="SMR" id="Q7NAK6"/>
<dbReference type="KEGG" id="mga:MGA_0469"/>
<dbReference type="PATRIC" id="fig|233150.7.peg.720"/>
<dbReference type="HOGENOM" id="CLU_007831_2_2_14"/>
<dbReference type="OrthoDB" id="9815560at2"/>
<dbReference type="Proteomes" id="UP000001418">
    <property type="component" value="Chromosome"/>
</dbReference>
<dbReference type="GO" id="GO:0005829">
    <property type="term" value="C:cytosol"/>
    <property type="evidence" value="ECO:0007669"/>
    <property type="project" value="TreeGrafter"/>
</dbReference>
<dbReference type="GO" id="GO:0050660">
    <property type="term" value="F:flavin adenine dinucleotide binding"/>
    <property type="evidence" value="ECO:0007669"/>
    <property type="project" value="UniProtKB-UniRule"/>
</dbReference>
<dbReference type="GO" id="GO:0030488">
    <property type="term" value="P:tRNA methylation"/>
    <property type="evidence" value="ECO:0007669"/>
    <property type="project" value="TreeGrafter"/>
</dbReference>
<dbReference type="GO" id="GO:0002098">
    <property type="term" value="P:tRNA wobble uridine modification"/>
    <property type="evidence" value="ECO:0007669"/>
    <property type="project" value="InterPro"/>
</dbReference>
<dbReference type="FunFam" id="1.10.150.570:FF:000001">
    <property type="entry name" value="tRNA uridine 5-carboxymethylaminomethyl modification enzyme MnmG"/>
    <property type="match status" value="1"/>
</dbReference>
<dbReference type="FunFam" id="3.50.50.60:FF:000002">
    <property type="entry name" value="tRNA uridine 5-carboxymethylaminomethyl modification enzyme MnmG"/>
    <property type="match status" value="1"/>
</dbReference>
<dbReference type="Gene3D" id="3.50.50.60">
    <property type="entry name" value="FAD/NAD(P)-binding domain"/>
    <property type="match status" value="2"/>
</dbReference>
<dbReference type="Gene3D" id="1.10.150.570">
    <property type="entry name" value="GidA associated domain, C-terminal subdomain"/>
    <property type="match status" value="1"/>
</dbReference>
<dbReference type="Gene3D" id="1.10.10.1800">
    <property type="entry name" value="tRNA uridine 5-carboxymethylaminomethyl modification enzyme MnmG/GidA"/>
    <property type="match status" value="1"/>
</dbReference>
<dbReference type="HAMAP" id="MF_00129">
    <property type="entry name" value="MnmG_GidA"/>
    <property type="match status" value="1"/>
</dbReference>
<dbReference type="InterPro" id="IPR036188">
    <property type="entry name" value="FAD/NAD-bd_sf"/>
</dbReference>
<dbReference type="InterPro" id="IPR049312">
    <property type="entry name" value="GIDA_C_N"/>
</dbReference>
<dbReference type="InterPro" id="IPR004416">
    <property type="entry name" value="MnmG"/>
</dbReference>
<dbReference type="InterPro" id="IPR002218">
    <property type="entry name" value="MnmG-rel"/>
</dbReference>
<dbReference type="InterPro" id="IPR020595">
    <property type="entry name" value="MnmG-rel_CS"/>
</dbReference>
<dbReference type="InterPro" id="IPR026904">
    <property type="entry name" value="MnmG_C"/>
</dbReference>
<dbReference type="InterPro" id="IPR047001">
    <property type="entry name" value="MnmG_C_subdom"/>
</dbReference>
<dbReference type="InterPro" id="IPR044920">
    <property type="entry name" value="MnmG_C_subdom_sf"/>
</dbReference>
<dbReference type="InterPro" id="IPR040131">
    <property type="entry name" value="MnmG_N"/>
</dbReference>
<dbReference type="NCBIfam" id="TIGR00136">
    <property type="entry name" value="mnmG_gidA"/>
    <property type="match status" value="1"/>
</dbReference>
<dbReference type="PANTHER" id="PTHR11806">
    <property type="entry name" value="GLUCOSE INHIBITED DIVISION PROTEIN A"/>
    <property type="match status" value="1"/>
</dbReference>
<dbReference type="PANTHER" id="PTHR11806:SF0">
    <property type="entry name" value="PROTEIN MTO1 HOMOLOG, MITOCHONDRIAL"/>
    <property type="match status" value="1"/>
</dbReference>
<dbReference type="Pfam" id="PF01134">
    <property type="entry name" value="GIDA"/>
    <property type="match status" value="1"/>
</dbReference>
<dbReference type="Pfam" id="PF21680">
    <property type="entry name" value="GIDA_C_1st"/>
    <property type="match status" value="1"/>
</dbReference>
<dbReference type="Pfam" id="PF13932">
    <property type="entry name" value="SAM_GIDA_C"/>
    <property type="match status" value="1"/>
</dbReference>
<dbReference type="SMART" id="SM01228">
    <property type="entry name" value="GIDA_assoc_3"/>
    <property type="match status" value="1"/>
</dbReference>
<dbReference type="SUPFAM" id="SSF51905">
    <property type="entry name" value="FAD/NAD(P)-binding domain"/>
    <property type="match status" value="1"/>
</dbReference>
<dbReference type="PROSITE" id="PS01280">
    <property type="entry name" value="GIDA_1"/>
    <property type="match status" value="1"/>
</dbReference>
<dbReference type="PROSITE" id="PS01281">
    <property type="entry name" value="GIDA_2"/>
    <property type="match status" value="1"/>
</dbReference>
<keyword id="KW-0963">Cytoplasm</keyword>
<keyword id="KW-0274">FAD</keyword>
<keyword id="KW-0285">Flavoprotein</keyword>
<keyword id="KW-0520">NAD</keyword>
<keyword id="KW-1185">Reference proteome</keyword>
<keyword id="KW-0819">tRNA processing</keyword>
<gene>
    <name evidence="1" type="primary">mnmG</name>
    <name evidence="1" type="synonym">gidA</name>
    <name type="ordered locus">MYCGA6430</name>
    <name type="ORF">MGA_0469</name>
</gene>
<accession>Q7NAK6</accession>
<comment type="function">
    <text evidence="1">NAD-binding protein involved in the addition of a carboxymethylaminomethyl (cmnm) group at the wobble position (U34) of certain tRNAs, forming tRNA-cmnm(5)s(2)U34.</text>
</comment>
<comment type="cofactor">
    <cofactor evidence="1">
        <name>FAD</name>
        <dbReference type="ChEBI" id="CHEBI:57692"/>
    </cofactor>
</comment>
<comment type="subunit">
    <text evidence="1">Homodimer. Heterotetramer of two MnmE and two MnmG subunits.</text>
</comment>
<comment type="subcellular location">
    <subcellularLocation>
        <location evidence="1">Cytoplasm</location>
    </subcellularLocation>
</comment>
<comment type="similarity">
    <text evidence="1">Belongs to the MnmG family.</text>
</comment>
<sequence>MNKFIVVGAGHAGLEAAFILSKLNNKVYLCVLDRKYVANCPCNPSVGGPAKGIVTREIDALGGIQALAADSTALQRKILNSSKGPGVQCLRFQIDKVYYKKWFLEQIDNNENIELVEGEVTEVIKNGDTATGVMIDGVKKLEAGAVIITTGTYLKSLTFSGKDVKNEGPEGFKNSNNLSEWFKVNGFELIRLKTGTPPRIKKDSIDYSNLQIEPGNGTELYFSHWSKNKYIDYELPCYLIHTTEEIHKIINDNLHLSAMYSGNITGVGPRYCPSIEDKIVRFSNKPRHQIFLEPESLELDTVYLGGFSTSLDISVQDKIIRLLPGLKKAEVIKYGYAIEYDAINPIQLYPSLESKLIKNLFFAGQINGTSGYEEAAGQGLIAGINANQKIKNKEPLILSRDEAYIGVMIDDIVNKGVTDPYRLLTSRAEYRLLLRNDNVLDRLIQKGYEIGTISKEQIDLYNQNLEKKNKLIEFLKDKKVGMYTLLKAHTNNTNFSLYEFLKRPEIKLIELLKLIEFDYSNYDLELLKNIEITVKYEGYIKKESRIVNSLKNLESIKIPKDLIYDKVQNLSIEAIDKLNKIKPLNLAQAQRISGINLADIISLKTHLEQNA</sequence>